<comment type="function">
    <text evidence="1">F(1)F(0) ATP synthase produces ATP from ADP in the presence of a proton or sodium gradient. F-type ATPases consist of two structural domains, F(1) containing the extramembraneous catalytic core and F(0) containing the membrane proton channel, linked together by a central stalk and a peripheral stalk. During catalysis, ATP synthesis in the catalytic domain of F(1) is coupled via a rotary mechanism of the central stalk subunits to proton translocation.</text>
</comment>
<comment type="function">
    <text evidence="1">Component of the F(0) channel, it forms part of the peripheral stalk, linking F(1) to F(0).</text>
</comment>
<comment type="subunit">
    <text evidence="1">F-type ATPases have 2 components, F(1) - the catalytic core - and F(0) - the membrane proton channel. F(1) has five subunits: alpha(3), beta(3), gamma(1), delta(1), epsilon(1). F(0) has four main subunits: a(1), b(1), b'(1) and c(10-14). The alpha and beta chains form an alternating ring which encloses part of the gamma chain. F(1) is attached to F(0) by a central stalk formed by the gamma and epsilon chains, while a peripheral stalk is formed by the delta, b and b' chains.</text>
</comment>
<comment type="subcellular location">
    <subcellularLocation>
        <location evidence="1">Cellular thylakoid membrane</location>
        <topology evidence="1">Single-pass membrane protein</topology>
    </subcellularLocation>
</comment>
<comment type="similarity">
    <text evidence="1">Belongs to the ATPase B chain family.</text>
</comment>
<proteinExistence type="inferred from homology"/>
<evidence type="ECO:0000255" key="1">
    <source>
        <dbReference type="HAMAP-Rule" id="MF_01398"/>
    </source>
</evidence>
<reference key="1">
    <citation type="journal article" date="2007" name="PLoS Genet.">
        <title>Patterns and implications of gene gain and loss in the evolution of Prochlorococcus.</title>
        <authorList>
            <person name="Kettler G.C."/>
            <person name="Martiny A.C."/>
            <person name="Huang K."/>
            <person name="Zucker J."/>
            <person name="Coleman M.L."/>
            <person name="Rodrigue S."/>
            <person name="Chen F."/>
            <person name="Lapidus A."/>
            <person name="Ferriera S."/>
            <person name="Johnson J."/>
            <person name="Steglich C."/>
            <person name="Church G.M."/>
            <person name="Richardson P."/>
            <person name="Chisholm S.W."/>
        </authorList>
    </citation>
    <scope>NUCLEOTIDE SEQUENCE [LARGE SCALE GENOMIC DNA]</scope>
    <source>
        <strain>NATL1A</strain>
    </source>
</reference>
<protein>
    <recommendedName>
        <fullName evidence="1">ATP synthase subunit b</fullName>
    </recommendedName>
    <alternativeName>
        <fullName evidence="1">ATP synthase F(0) sector subunit b</fullName>
    </alternativeName>
    <alternativeName>
        <fullName evidence="1">ATPase subunit I</fullName>
    </alternativeName>
    <alternativeName>
        <fullName evidence="1">F-type ATPase subunit b</fullName>
        <shortName evidence="1">F-ATPase subunit b</shortName>
    </alternativeName>
</protein>
<keyword id="KW-0066">ATP synthesis</keyword>
<keyword id="KW-0138">CF(0)</keyword>
<keyword id="KW-0375">Hydrogen ion transport</keyword>
<keyword id="KW-0406">Ion transport</keyword>
<keyword id="KW-0472">Membrane</keyword>
<keyword id="KW-0793">Thylakoid</keyword>
<keyword id="KW-0812">Transmembrane</keyword>
<keyword id="KW-1133">Transmembrane helix</keyword>
<keyword id="KW-0813">Transport</keyword>
<organism>
    <name type="scientific">Prochlorococcus marinus (strain NATL1A)</name>
    <dbReference type="NCBI Taxonomy" id="167555"/>
    <lineage>
        <taxon>Bacteria</taxon>
        <taxon>Bacillati</taxon>
        <taxon>Cyanobacteriota</taxon>
        <taxon>Cyanophyceae</taxon>
        <taxon>Synechococcales</taxon>
        <taxon>Prochlorococcaceae</taxon>
        <taxon>Prochlorococcus</taxon>
    </lineage>
</organism>
<name>ATPF_PROM1</name>
<sequence length="170" mass="18854">MTPLIFASEGFGLNLNIFETNIINLAVVVFGLYKFLPGFLGKILEKRRTTILSDLKEAEERLAQAQDSLSQAKDDLSSAKQKADKIRNDCKVRAEAIRLESEKRTVEEMARIKQGAASDLSAEAARVTSQLRKEAAELAIEKALAMLPKKLDSNTQDNFLKQSIKNIGDN</sequence>
<gene>
    <name evidence="1" type="primary">atpF</name>
    <name type="ordered locus">NATL1_18511</name>
</gene>
<dbReference type="EMBL" id="CP000553">
    <property type="protein sequence ID" value="ABM76407.1"/>
    <property type="molecule type" value="Genomic_DNA"/>
</dbReference>
<dbReference type="RefSeq" id="WP_011295329.1">
    <property type="nucleotide sequence ID" value="NC_008819.1"/>
</dbReference>
<dbReference type="SMR" id="A2C4J7"/>
<dbReference type="KEGG" id="pme:NATL1_18511"/>
<dbReference type="eggNOG" id="COG0711">
    <property type="taxonomic scope" value="Bacteria"/>
</dbReference>
<dbReference type="HOGENOM" id="CLU_079215_8_1_3"/>
<dbReference type="Proteomes" id="UP000002592">
    <property type="component" value="Chromosome"/>
</dbReference>
<dbReference type="GO" id="GO:0031676">
    <property type="term" value="C:plasma membrane-derived thylakoid membrane"/>
    <property type="evidence" value="ECO:0007669"/>
    <property type="project" value="UniProtKB-SubCell"/>
</dbReference>
<dbReference type="GO" id="GO:0045259">
    <property type="term" value="C:proton-transporting ATP synthase complex"/>
    <property type="evidence" value="ECO:0007669"/>
    <property type="project" value="UniProtKB-KW"/>
</dbReference>
<dbReference type="GO" id="GO:0046933">
    <property type="term" value="F:proton-transporting ATP synthase activity, rotational mechanism"/>
    <property type="evidence" value="ECO:0007669"/>
    <property type="project" value="UniProtKB-UniRule"/>
</dbReference>
<dbReference type="CDD" id="cd06503">
    <property type="entry name" value="ATP-synt_Fo_b"/>
    <property type="match status" value="1"/>
</dbReference>
<dbReference type="Gene3D" id="1.20.5.620">
    <property type="entry name" value="F1F0 ATP synthase subunit B, membrane domain"/>
    <property type="match status" value="1"/>
</dbReference>
<dbReference type="HAMAP" id="MF_01398">
    <property type="entry name" value="ATP_synth_b_bprime"/>
    <property type="match status" value="1"/>
</dbReference>
<dbReference type="InterPro" id="IPR028987">
    <property type="entry name" value="ATP_synth_B-like_membr_sf"/>
</dbReference>
<dbReference type="InterPro" id="IPR002146">
    <property type="entry name" value="ATP_synth_b/b'su_bac/chlpt"/>
</dbReference>
<dbReference type="InterPro" id="IPR005864">
    <property type="entry name" value="ATP_synth_F0_bsu_bac"/>
</dbReference>
<dbReference type="NCBIfam" id="TIGR01144">
    <property type="entry name" value="ATP_synt_b"/>
    <property type="match status" value="1"/>
</dbReference>
<dbReference type="NCBIfam" id="NF005606">
    <property type="entry name" value="PRK07352.1"/>
    <property type="match status" value="1"/>
</dbReference>
<dbReference type="PANTHER" id="PTHR34264">
    <property type="entry name" value="ATP SYNTHASE SUBUNIT B, CHLOROPLASTIC"/>
    <property type="match status" value="1"/>
</dbReference>
<dbReference type="PANTHER" id="PTHR34264:SF3">
    <property type="entry name" value="ATP SYNTHASE SUBUNIT B, CHLOROPLASTIC"/>
    <property type="match status" value="1"/>
</dbReference>
<dbReference type="Pfam" id="PF00430">
    <property type="entry name" value="ATP-synt_B"/>
    <property type="match status" value="1"/>
</dbReference>
<dbReference type="SUPFAM" id="SSF81573">
    <property type="entry name" value="F1F0 ATP synthase subunit B, membrane domain"/>
    <property type="match status" value="1"/>
</dbReference>
<accession>A2C4J7</accession>
<feature type="chain" id="PRO_0000368671" description="ATP synthase subunit b">
    <location>
        <begin position="1"/>
        <end position="170"/>
    </location>
</feature>
<feature type="transmembrane region" description="Helical" evidence="1">
    <location>
        <begin position="22"/>
        <end position="44"/>
    </location>
</feature>